<gene>
    <name type="ordered locus">AEL118C</name>
</gene>
<feature type="chain" id="PRO_0000333581" description="Probable serine/threonine-protein kinase HAL5-like">
    <location>
        <begin position="1"/>
        <end position="683"/>
    </location>
</feature>
<feature type="domain" description="Protein kinase" evidence="1">
    <location>
        <begin position="364"/>
        <end position="670"/>
    </location>
</feature>
<feature type="region of interest" description="Disordered" evidence="3">
    <location>
        <begin position="1"/>
        <end position="90"/>
    </location>
</feature>
<feature type="region of interest" description="Disordered" evidence="3">
    <location>
        <begin position="157"/>
        <end position="200"/>
    </location>
</feature>
<feature type="compositionally biased region" description="Low complexity" evidence="3">
    <location>
        <begin position="36"/>
        <end position="48"/>
    </location>
</feature>
<feature type="compositionally biased region" description="Gly residues" evidence="3">
    <location>
        <begin position="50"/>
        <end position="60"/>
    </location>
</feature>
<feature type="compositionally biased region" description="Polar residues" evidence="3">
    <location>
        <begin position="69"/>
        <end position="85"/>
    </location>
</feature>
<feature type="active site" description="Proton acceptor" evidence="1 2">
    <location>
        <position position="521"/>
    </location>
</feature>
<feature type="binding site" evidence="1">
    <location>
        <begin position="370"/>
        <end position="378"/>
    </location>
    <ligand>
        <name>ATP</name>
        <dbReference type="ChEBI" id="CHEBI:30616"/>
    </ligand>
</feature>
<feature type="binding site" evidence="1">
    <location>
        <position position="411"/>
    </location>
    <ligand>
        <name>ATP</name>
        <dbReference type="ChEBI" id="CHEBI:30616"/>
    </ligand>
</feature>
<evidence type="ECO:0000255" key="1">
    <source>
        <dbReference type="PROSITE-ProRule" id="PRU00159"/>
    </source>
</evidence>
<evidence type="ECO:0000255" key="2">
    <source>
        <dbReference type="PROSITE-ProRule" id="PRU10027"/>
    </source>
</evidence>
<evidence type="ECO:0000256" key="3">
    <source>
        <dbReference type="SAM" id="MobiDB-lite"/>
    </source>
</evidence>
<evidence type="ECO:0000305" key="4"/>
<organism>
    <name type="scientific">Eremothecium gossypii (strain ATCC 10895 / CBS 109.51 / FGSC 9923 / NRRL Y-1056)</name>
    <name type="common">Yeast</name>
    <name type="synonym">Ashbya gossypii</name>
    <dbReference type="NCBI Taxonomy" id="284811"/>
    <lineage>
        <taxon>Eukaryota</taxon>
        <taxon>Fungi</taxon>
        <taxon>Dikarya</taxon>
        <taxon>Ascomycota</taxon>
        <taxon>Saccharomycotina</taxon>
        <taxon>Saccharomycetes</taxon>
        <taxon>Saccharomycetales</taxon>
        <taxon>Saccharomycetaceae</taxon>
        <taxon>Eremothecium</taxon>
    </lineage>
</organism>
<dbReference type="EC" id="2.7.11.1"/>
<dbReference type="EMBL" id="AE016818">
    <property type="protein sequence ID" value="AAS52567.1"/>
    <property type="molecule type" value="Genomic_DNA"/>
</dbReference>
<dbReference type="RefSeq" id="NP_984743.1">
    <property type="nucleotide sequence ID" value="NM_210097.1"/>
</dbReference>
<dbReference type="SMR" id="Q757X8"/>
<dbReference type="FunCoup" id="Q757X8">
    <property type="interactions" value="225"/>
</dbReference>
<dbReference type="STRING" id="284811.Q757X8"/>
<dbReference type="EnsemblFungi" id="AAS52567">
    <property type="protein sequence ID" value="AAS52567"/>
    <property type="gene ID" value="AGOS_AEL118C"/>
</dbReference>
<dbReference type="GeneID" id="4620930"/>
<dbReference type="KEGG" id="ago:AGOS_AEL118C"/>
<dbReference type="eggNOG" id="KOG0590">
    <property type="taxonomic scope" value="Eukaryota"/>
</dbReference>
<dbReference type="HOGENOM" id="CLU_016904_0_0_1"/>
<dbReference type="InParanoid" id="Q757X8"/>
<dbReference type="OMA" id="ECDIENA"/>
<dbReference type="OrthoDB" id="6513151at2759"/>
<dbReference type="Proteomes" id="UP000000591">
    <property type="component" value="Chromosome V"/>
</dbReference>
<dbReference type="GO" id="GO:0005524">
    <property type="term" value="F:ATP binding"/>
    <property type="evidence" value="ECO:0007669"/>
    <property type="project" value="UniProtKB-KW"/>
</dbReference>
<dbReference type="GO" id="GO:0106310">
    <property type="term" value="F:protein serine kinase activity"/>
    <property type="evidence" value="ECO:0007669"/>
    <property type="project" value="RHEA"/>
</dbReference>
<dbReference type="GO" id="GO:0004674">
    <property type="term" value="F:protein serine/threonine kinase activity"/>
    <property type="evidence" value="ECO:0000318"/>
    <property type="project" value="GO_Central"/>
</dbReference>
<dbReference type="GO" id="GO:0030003">
    <property type="term" value="P:intracellular monoatomic cation homeostasis"/>
    <property type="evidence" value="ECO:0000318"/>
    <property type="project" value="GO_Central"/>
</dbReference>
<dbReference type="Gene3D" id="1.10.510.10">
    <property type="entry name" value="Transferase(Phosphotransferase) domain 1"/>
    <property type="match status" value="1"/>
</dbReference>
<dbReference type="InterPro" id="IPR011009">
    <property type="entry name" value="Kinase-like_dom_sf"/>
</dbReference>
<dbReference type="InterPro" id="IPR000719">
    <property type="entry name" value="Prot_kinase_dom"/>
</dbReference>
<dbReference type="InterPro" id="IPR008271">
    <property type="entry name" value="Ser/Thr_kinase_AS"/>
</dbReference>
<dbReference type="PANTHER" id="PTHR24343">
    <property type="entry name" value="SERINE/THREONINE KINASE"/>
    <property type="match status" value="1"/>
</dbReference>
<dbReference type="PANTHER" id="PTHR24343:SF43">
    <property type="entry name" value="SERINE_THREONINE-PROTEIN KINASE HAL5-RELATED"/>
    <property type="match status" value="1"/>
</dbReference>
<dbReference type="Pfam" id="PF00069">
    <property type="entry name" value="Pkinase"/>
    <property type="match status" value="1"/>
</dbReference>
<dbReference type="SMART" id="SM00220">
    <property type="entry name" value="S_TKc"/>
    <property type="match status" value="1"/>
</dbReference>
<dbReference type="SUPFAM" id="SSF56112">
    <property type="entry name" value="Protein kinase-like (PK-like)"/>
    <property type="match status" value="1"/>
</dbReference>
<dbReference type="PROSITE" id="PS50011">
    <property type="entry name" value="PROTEIN_KINASE_DOM"/>
    <property type="match status" value="1"/>
</dbReference>
<dbReference type="PROSITE" id="PS00108">
    <property type="entry name" value="PROTEIN_KINASE_ST"/>
    <property type="match status" value="1"/>
</dbReference>
<sequence>MPQQVRLSRENSVKRSRSLTKSFRGLFKFNSPGSPPSSAATSDSSEMSGAQGGRGNGLLGGRTKKASISPKSEAQFTQRNKSAESVVSDEGVAMVASAGAQFYGRGKHESSPNVLMTGGEEAARAAGRASAESIALSEGGPPSIDTKLERVTPSLIYPQNGRAKHSSQRSRSASVGRNKERGGPTPAPIGSIREEESKKAHKCIIQQEHFTVDENGNHQHSLKVLPLIVQDPESHKPKLFSFSAVFKSHKNGEDEELSDAFSILPDYSTVLEKTLVEPLSEVKIFSEAAQPDENGGRTEANQPKDMPKIVNKHAAIGNEELKLINNLSETIHVGMQGPDKHSSPPQPFTCKATKSKQVLAEKYGKCIGMIGQGAYGTVWVTCRSLPQDNQTETHYPTETYERNGKLFYAIKEIKPRADEPNEKFSTRLTSEFVIGHSLSGGAGGTKRLTSHPNILKVLDLMQAHDVFIEVFEFCPSGDLFSLLTRSSKTGSGLHPLEADCFMKQLLNGVRYMHDHGVAHCDLKPENILFTPNGTLKLCDFGSSSVFQTAWEKRVHFQTGAVGSEPYVAPEEFIPKREYDTRLVDCWSCGIIYCTMVLGHYLWKIAIKEKDQIYSAFLDDMTTRGEYYVFENMRHVNQEVNRCRKMCLYNIFQWDPKKRITIPKLLDTPWMRRTKCCVNYRAAI</sequence>
<proteinExistence type="inferred from homology"/>
<reference key="1">
    <citation type="journal article" date="2004" name="Science">
        <title>The Ashbya gossypii genome as a tool for mapping the ancient Saccharomyces cerevisiae genome.</title>
        <authorList>
            <person name="Dietrich F.S."/>
            <person name="Voegeli S."/>
            <person name="Brachat S."/>
            <person name="Lerch A."/>
            <person name="Gates K."/>
            <person name="Steiner S."/>
            <person name="Mohr C."/>
            <person name="Poehlmann R."/>
            <person name="Luedi P."/>
            <person name="Choi S."/>
            <person name="Wing R.A."/>
            <person name="Flavier A."/>
            <person name="Gaffney T.D."/>
            <person name="Philippsen P."/>
        </authorList>
    </citation>
    <scope>NUCLEOTIDE SEQUENCE [LARGE SCALE GENOMIC DNA]</scope>
    <source>
        <strain>ATCC 10895 / CBS 109.51 / FGSC 9923 / NRRL Y-1056</strain>
    </source>
</reference>
<reference key="2">
    <citation type="journal article" date="2013" name="G3 (Bethesda)">
        <title>Genomes of Ashbya fungi isolated from insects reveal four mating-type loci, numerous translocations, lack of transposons, and distinct gene duplications.</title>
        <authorList>
            <person name="Dietrich F.S."/>
            <person name="Voegeli S."/>
            <person name="Kuo S."/>
            <person name="Philippsen P."/>
        </authorList>
    </citation>
    <scope>GENOME REANNOTATION</scope>
    <source>
        <strain>ATCC 10895 / CBS 109.51 / FGSC 9923 / NRRL Y-1056</strain>
    </source>
</reference>
<comment type="catalytic activity">
    <reaction>
        <text>L-seryl-[protein] + ATP = O-phospho-L-seryl-[protein] + ADP + H(+)</text>
        <dbReference type="Rhea" id="RHEA:17989"/>
        <dbReference type="Rhea" id="RHEA-COMP:9863"/>
        <dbReference type="Rhea" id="RHEA-COMP:11604"/>
        <dbReference type="ChEBI" id="CHEBI:15378"/>
        <dbReference type="ChEBI" id="CHEBI:29999"/>
        <dbReference type="ChEBI" id="CHEBI:30616"/>
        <dbReference type="ChEBI" id="CHEBI:83421"/>
        <dbReference type="ChEBI" id="CHEBI:456216"/>
        <dbReference type="EC" id="2.7.11.1"/>
    </reaction>
</comment>
<comment type="catalytic activity">
    <reaction>
        <text>L-threonyl-[protein] + ATP = O-phospho-L-threonyl-[protein] + ADP + H(+)</text>
        <dbReference type="Rhea" id="RHEA:46608"/>
        <dbReference type="Rhea" id="RHEA-COMP:11060"/>
        <dbReference type="Rhea" id="RHEA-COMP:11605"/>
        <dbReference type="ChEBI" id="CHEBI:15378"/>
        <dbReference type="ChEBI" id="CHEBI:30013"/>
        <dbReference type="ChEBI" id="CHEBI:30616"/>
        <dbReference type="ChEBI" id="CHEBI:61977"/>
        <dbReference type="ChEBI" id="CHEBI:456216"/>
        <dbReference type="EC" id="2.7.11.1"/>
    </reaction>
</comment>
<comment type="similarity">
    <text evidence="4">Belongs to the protein kinase superfamily. CAMK Ser/Thr protein kinase family. NPR/HAL subfamily. HAL5 sub-subfamily.</text>
</comment>
<name>HAL5_EREGS</name>
<keyword id="KW-0067">ATP-binding</keyword>
<keyword id="KW-0418">Kinase</keyword>
<keyword id="KW-0547">Nucleotide-binding</keyword>
<keyword id="KW-1185">Reference proteome</keyword>
<keyword id="KW-0723">Serine/threonine-protein kinase</keyword>
<keyword id="KW-0808">Transferase</keyword>
<accession>Q757X8</accession>
<protein>
    <recommendedName>
        <fullName>Probable serine/threonine-protein kinase HAL5-like</fullName>
        <ecNumber>2.7.11.1</ecNumber>
    </recommendedName>
</protein>